<dbReference type="EC" id="1.14.11.64" evidence="1"/>
<dbReference type="EMBL" id="CU928164">
    <property type="protein sequence ID" value="CAR18967.1"/>
    <property type="molecule type" value="Genomic_DNA"/>
</dbReference>
<dbReference type="RefSeq" id="WP_000993114.1">
    <property type="nucleotide sequence ID" value="NC_011750.1"/>
</dbReference>
<dbReference type="RefSeq" id="YP_002408779.1">
    <property type="nucleotide sequence ID" value="NC_011750.1"/>
</dbReference>
<dbReference type="SMR" id="B7NSE0"/>
<dbReference type="STRING" id="585057.ECIAI39_2845"/>
<dbReference type="KEGG" id="ect:ECIAI39_2845"/>
<dbReference type="PATRIC" id="fig|585057.6.peg.2952"/>
<dbReference type="HOGENOM" id="CLU_075277_0_0_6"/>
<dbReference type="Proteomes" id="UP000000749">
    <property type="component" value="Chromosome"/>
</dbReference>
<dbReference type="GO" id="GO:0008198">
    <property type="term" value="F:ferrous iron binding"/>
    <property type="evidence" value="ECO:0007669"/>
    <property type="project" value="UniProtKB-UniRule"/>
</dbReference>
<dbReference type="GO" id="GO:0106343">
    <property type="term" value="F:glutarate dioxygenase activity"/>
    <property type="evidence" value="ECO:0007669"/>
    <property type="project" value="UniProtKB-EC"/>
</dbReference>
<dbReference type="GO" id="GO:0050498">
    <property type="term" value="F:oxidoreductase activity, acting on paired donors, with incorporation or reduction of molecular oxygen, with 2-oxoglutarate as one donor, and the other dehydrogenated"/>
    <property type="evidence" value="ECO:0007669"/>
    <property type="project" value="UniProtKB-UniRule"/>
</dbReference>
<dbReference type="GO" id="GO:0019477">
    <property type="term" value="P:L-lysine catabolic process"/>
    <property type="evidence" value="ECO:0007669"/>
    <property type="project" value="UniProtKB-UniRule"/>
</dbReference>
<dbReference type="CDD" id="cd00250">
    <property type="entry name" value="CAS_like"/>
    <property type="match status" value="1"/>
</dbReference>
<dbReference type="FunFam" id="3.60.130.10:FF:000004">
    <property type="entry name" value="Glutarate 2-hydroxylase"/>
    <property type="match status" value="1"/>
</dbReference>
<dbReference type="Gene3D" id="3.60.130.10">
    <property type="entry name" value="Clavaminate synthase-like"/>
    <property type="match status" value="1"/>
</dbReference>
<dbReference type="HAMAP" id="MF_01083">
    <property type="entry name" value="glutarate_hydroxylase"/>
    <property type="match status" value="1"/>
</dbReference>
<dbReference type="InterPro" id="IPR015038">
    <property type="entry name" value="GlaH"/>
</dbReference>
<dbReference type="InterPro" id="IPR042098">
    <property type="entry name" value="TauD-like_sf"/>
</dbReference>
<dbReference type="NCBIfam" id="NF002814">
    <property type="entry name" value="PRK02963.1"/>
    <property type="match status" value="1"/>
</dbReference>
<dbReference type="Pfam" id="PF08943">
    <property type="entry name" value="CsiD"/>
    <property type="match status" value="1"/>
</dbReference>
<dbReference type="SUPFAM" id="SSF51197">
    <property type="entry name" value="Clavaminate synthase-like"/>
    <property type="match status" value="1"/>
</dbReference>
<comment type="function">
    <text evidence="1">Acts as an alpha-ketoglutarate-dependent dioxygenase catalyzing hydroxylation of glutarate (GA) to L-2-hydroxyglutarate (L2HG). Functions in a L-lysine degradation pathway that proceeds via cadaverine, glutarate and L-2-hydroxyglutarate.</text>
</comment>
<comment type="catalytic activity">
    <reaction evidence="1">
        <text>glutarate + 2-oxoglutarate + O2 = (S)-2-hydroxyglutarate + succinate + CO2</text>
        <dbReference type="Rhea" id="RHEA:13821"/>
        <dbReference type="ChEBI" id="CHEBI:15379"/>
        <dbReference type="ChEBI" id="CHEBI:16526"/>
        <dbReference type="ChEBI" id="CHEBI:16782"/>
        <dbReference type="ChEBI" id="CHEBI:16810"/>
        <dbReference type="ChEBI" id="CHEBI:30031"/>
        <dbReference type="ChEBI" id="CHEBI:30921"/>
        <dbReference type="EC" id="1.14.11.64"/>
    </reaction>
    <physiologicalReaction direction="left-to-right" evidence="1">
        <dbReference type="Rhea" id="RHEA:13822"/>
    </physiologicalReaction>
</comment>
<comment type="cofactor">
    <cofactor evidence="1">
        <name>Fe(2+)</name>
        <dbReference type="ChEBI" id="CHEBI:29033"/>
    </cofactor>
    <text evidence="1">Binds 1 Fe(2+) ion per subunit.</text>
</comment>
<comment type="pathway">
    <text evidence="1">Amino-acid degradation.</text>
</comment>
<comment type="subunit">
    <text evidence="1">Homotetramer.</text>
</comment>
<comment type="similarity">
    <text evidence="1">Belongs to the glutarate hydroxylase family.</text>
</comment>
<sequence length="325" mass="37396">MNALTAVQNNAVDSGQDYSGFTLIPSAQSPRLLELTFTEQTTKQFLEQVAEWPVQALEYKSFLRFRVGKILDDLCANQLQPLLLKTLLNRAEGALLINAVGVDDVKQADEMVKLATAVAHLIGRSNFDAMSGQYYARFVVKNVDNSDSYLRQPHRVMELHNDGTYVEEITDYVLMMKIDEQNMQGGNSLLLHLDDWEHLDHYFRHPLARRPMRFAAPPSKNVSKDVFHPVFDVDQQGRPVMRYIDQFVQPKDFEEGVWLSELSDAIETSKGILSVPVPVGKFLLINNLFWLHGRDRFTPHPDLRRELMRQRGYFAYATNHYQTHQ</sequence>
<evidence type="ECO:0000255" key="1">
    <source>
        <dbReference type="HAMAP-Rule" id="MF_01083"/>
    </source>
</evidence>
<gene>
    <name evidence="1" type="primary">glaH</name>
    <name type="ordered locus">ECIAI39_2845</name>
</gene>
<reference key="1">
    <citation type="journal article" date="2009" name="PLoS Genet.">
        <title>Organised genome dynamics in the Escherichia coli species results in highly diverse adaptive paths.</title>
        <authorList>
            <person name="Touchon M."/>
            <person name="Hoede C."/>
            <person name="Tenaillon O."/>
            <person name="Barbe V."/>
            <person name="Baeriswyl S."/>
            <person name="Bidet P."/>
            <person name="Bingen E."/>
            <person name="Bonacorsi S."/>
            <person name="Bouchier C."/>
            <person name="Bouvet O."/>
            <person name="Calteau A."/>
            <person name="Chiapello H."/>
            <person name="Clermont O."/>
            <person name="Cruveiller S."/>
            <person name="Danchin A."/>
            <person name="Diard M."/>
            <person name="Dossat C."/>
            <person name="Karoui M.E."/>
            <person name="Frapy E."/>
            <person name="Garry L."/>
            <person name="Ghigo J.M."/>
            <person name="Gilles A.M."/>
            <person name="Johnson J."/>
            <person name="Le Bouguenec C."/>
            <person name="Lescat M."/>
            <person name="Mangenot S."/>
            <person name="Martinez-Jehanne V."/>
            <person name="Matic I."/>
            <person name="Nassif X."/>
            <person name="Oztas S."/>
            <person name="Petit M.A."/>
            <person name="Pichon C."/>
            <person name="Rouy Z."/>
            <person name="Ruf C.S."/>
            <person name="Schneider D."/>
            <person name="Tourret J."/>
            <person name="Vacherie B."/>
            <person name="Vallenet D."/>
            <person name="Medigue C."/>
            <person name="Rocha E.P.C."/>
            <person name="Denamur E."/>
        </authorList>
    </citation>
    <scope>NUCLEOTIDE SEQUENCE [LARGE SCALE GENOMIC DNA]</scope>
    <source>
        <strain>IAI39 / ExPEC</strain>
    </source>
</reference>
<name>GLAH_ECO7I</name>
<keyword id="KW-0223">Dioxygenase</keyword>
<keyword id="KW-0408">Iron</keyword>
<keyword id="KW-0479">Metal-binding</keyword>
<keyword id="KW-0560">Oxidoreductase</keyword>
<protein>
    <recommendedName>
        <fullName evidence="1">Glutarate 2-hydroxylase</fullName>
        <shortName evidence="1">G-2-H</shortName>
        <ecNumber evidence="1">1.14.11.64</ecNumber>
    </recommendedName>
</protein>
<accession>B7NSE0</accession>
<proteinExistence type="inferred from homology"/>
<organism>
    <name type="scientific">Escherichia coli O7:K1 (strain IAI39 / ExPEC)</name>
    <dbReference type="NCBI Taxonomy" id="585057"/>
    <lineage>
        <taxon>Bacteria</taxon>
        <taxon>Pseudomonadati</taxon>
        <taxon>Pseudomonadota</taxon>
        <taxon>Gammaproteobacteria</taxon>
        <taxon>Enterobacterales</taxon>
        <taxon>Enterobacteriaceae</taxon>
        <taxon>Escherichia</taxon>
    </lineage>
</organism>
<feature type="chain" id="PRO_1000136865" description="Glutarate 2-hydroxylase">
    <location>
        <begin position="1"/>
        <end position="325"/>
    </location>
</feature>
<feature type="binding site" evidence="1">
    <location>
        <position position="160"/>
    </location>
    <ligand>
        <name>Fe cation</name>
        <dbReference type="ChEBI" id="CHEBI:24875"/>
    </ligand>
</feature>
<feature type="binding site" evidence="1">
    <location>
        <position position="162"/>
    </location>
    <ligand>
        <name>Fe cation</name>
        <dbReference type="ChEBI" id="CHEBI:24875"/>
    </ligand>
</feature>
<feature type="binding site" evidence="1">
    <location>
        <position position="292"/>
    </location>
    <ligand>
        <name>Fe cation</name>
        <dbReference type="ChEBI" id="CHEBI:24875"/>
    </ligand>
</feature>